<dbReference type="EMBL" id="CP000847">
    <property type="protein sequence ID" value="ABV74654.1"/>
    <property type="molecule type" value="Genomic_DNA"/>
</dbReference>
<dbReference type="RefSeq" id="WP_012149288.1">
    <property type="nucleotide sequence ID" value="NC_009881.1"/>
</dbReference>
<dbReference type="SMR" id="A8GMM9"/>
<dbReference type="STRING" id="293614.A1C_01715"/>
<dbReference type="KEGG" id="rak:A1C_01715"/>
<dbReference type="eggNOG" id="COG0102">
    <property type="taxonomic scope" value="Bacteria"/>
</dbReference>
<dbReference type="HOGENOM" id="CLU_082184_2_0_5"/>
<dbReference type="Proteomes" id="UP000006830">
    <property type="component" value="Chromosome"/>
</dbReference>
<dbReference type="GO" id="GO:0022625">
    <property type="term" value="C:cytosolic large ribosomal subunit"/>
    <property type="evidence" value="ECO:0007669"/>
    <property type="project" value="TreeGrafter"/>
</dbReference>
<dbReference type="GO" id="GO:0003729">
    <property type="term" value="F:mRNA binding"/>
    <property type="evidence" value="ECO:0007669"/>
    <property type="project" value="TreeGrafter"/>
</dbReference>
<dbReference type="GO" id="GO:0003735">
    <property type="term" value="F:structural constituent of ribosome"/>
    <property type="evidence" value="ECO:0007669"/>
    <property type="project" value="InterPro"/>
</dbReference>
<dbReference type="GO" id="GO:0017148">
    <property type="term" value="P:negative regulation of translation"/>
    <property type="evidence" value="ECO:0007669"/>
    <property type="project" value="TreeGrafter"/>
</dbReference>
<dbReference type="GO" id="GO:0006412">
    <property type="term" value="P:translation"/>
    <property type="evidence" value="ECO:0007669"/>
    <property type="project" value="UniProtKB-UniRule"/>
</dbReference>
<dbReference type="CDD" id="cd00392">
    <property type="entry name" value="Ribosomal_L13"/>
    <property type="match status" value="1"/>
</dbReference>
<dbReference type="Gene3D" id="3.90.1180.10">
    <property type="entry name" value="Ribosomal protein L13"/>
    <property type="match status" value="1"/>
</dbReference>
<dbReference type="HAMAP" id="MF_01366">
    <property type="entry name" value="Ribosomal_uL13"/>
    <property type="match status" value="1"/>
</dbReference>
<dbReference type="InterPro" id="IPR005822">
    <property type="entry name" value="Ribosomal_uL13"/>
</dbReference>
<dbReference type="InterPro" id="IPR005823">
    <property type="entry name" value="Ribosomal_uL13_bac-type"/>
</dbReference>
<dbReference type="InterPro" id="IPR023563">
    <property type="entry name" value="Ribosomal_uL13_CS"/>
</dbReference>
<dbReference type="InterPro" id="IPR036899">
    <property type="entry name" value="Ribosomal_uL13_sf"/>
</dbReference>
<dbReference type="NCBIfam" id="TIGR01066">
    <property type="entry name" value="rplM_bact"/>
    <property type="match status" value="1"/>
</dbReference>
<dbReference type="PANTHER" id="PTHR11545:SF2">
    <property type="entry name" value="LARGE RIBOSOMAL SUBUNIT PROTEIN UL13M"/>
    <property type="match status" value="1"/>
</dbReference>
<dbReference type="PANTHER" id="PTHR11545">
    <property type="entry name" value="RIBOSOMAL PROTEIN L13"/>
    <property type="match status" value="1"/>
</dbReference>
<dbReference type="Pfam" id="PF00572">
    <property type="entry name" value="Ribosomal_L13"/>
    <property type="match status" value="1"/>
</dbReference>
<dbReference type="PIRSF" id="PIRSF002181">
    <property type="entry name" value="Ribosomal_L13"/>
    <property type="match status" value="1"/>
</dbReference>
<dbReference type="SUPFAM" id="SSF52161">
    <property type="entry name" value="Ribosomal protein L13"/>
    <property type="match status" value="1"/>
</dbReference>
<dbReference type="PROSITE" id="PS00783">
    <property type="entry name" value="RIBOSOMAL_L13"/>
    <property type="match status" value="1"/>
</dbReference>
<gene>
    <name evidence="1" type="primary">rplM</name>
    <name type="ordered locus">A1C_01715</name>
</gene>
<feature type="chain" id="PRO_1000055459" description="Large ribosomal subunit protein uL13">
    <location>
        <begin position="1"/>
        <end position="155"/>
    </location>
</feature>
<protein>
    <recommendedName>
        <fullName evidence="1">Large ribosomal subunit protein uL13</fullName>
    </recommendedName>
    <alternativeName>
        <fullName evidence="2">50S ribosomal protein L13</fullName>
    </alternativeName>
</protein>
<reference key="1">
    <citation type="submission" date="2007-09" db="EMBL/GenBank/DDBJ databases">
        <title>Complete genome sequence of Rickettsia akari.</title>
        <authorList>
            <person name="Madan A."/>
            <person name="Fahey J."/>
            <person name="Helton E."/>
            <person name="Ketteman M."/>
            <person name="Madan A."/>
            <person name="Rodrigues S."/>
            <person name="Sanchez A."/>
            <person name="Whiting M."/>
            <person name="Dasch G."/>
            <person name="Eremeeva M."/>
        </authorList>
    </citation>
    <scope>NUCLEOTIDE SEQUENCE [LARGE SCALE GENOMIC DNA]</scope>
    <source>
        <strain>Hartford</strain>
    </source>
</reference>
<sequence length="155" mass="17433">MKTYSAKPSEIEKKWWVIDAKNIVLGRLASRVANMLRGKHKPSFTPHLDCGDNIIIINAEHVKLTGKKANPRDGKIYYRYTGFPGGIKDTTAGKILSGKHPERVIKMAVKRMITRNALGAKQMSNLYVYANSDHPHMAQQPTVYDFAGQNPKNKK</sequence>
<name>RL13_RICAH</name>
<accession>A8GMM9</accession>
<comment type="function">
    <text evidence="1">This protein is one of the early assembly proteins of the 50S ribosomal subunit, although it is not seen to bind rRNA by itself. It is important during the early stages of 50S assembly.</text>
</comment>
<comment type="subunit">
    <text evidence="1">Part of the 50S ribosomal subunit.</text>
</comment>
<comment type="similarity">
    <text evidence="1">Belongs to the universal ribosomal protein uL13 family.</text>
</comment>
<keyword id="KW-0687">Ribonucleoprotein</keyword>
<keyword id="KW-0689">Ribosomal protein</keyword>
<organism>
    <name type="scientific">Rickettsia akari (strain Hartford)</name>
    <dbReference type="NCBI Taxonomy" id="293614"/>
    <lineage>
        <taxon>Bacteria</taxon>
        <taxon>Pseudomonadati</taxon>
        <taxon>Pseudomonadota</taxon>
        <taxon>Alphaproteobacteria</taxon>
        <taxon>Rickettsiales</taxon>
        <taxon>Rickettsiaceae</taxon>
        <taxon>Rickettsieae</taxon>
        <taxon>Rickettsia</taxon>
        <taxon>spotted fever group</taxon>
    </lineage>
</organism>
<proteinExistence type="inferred from homology"/>
<evidence type="ECO:0000255" key="1">
    <source>
        <dbReference type="HAMAP-Rule" id="MF_01366"/>
    </source>
</evidence>
<evidence type="ECO:0000305" key="2"/>